<protein>
    <recommendedName>
        <fullName evidence="1">NAD(P)H-quinone oxidoreductase subunit H, chloroplastic</fullName>
        <ecNumber evidence="1">7.1.1.-</ecNumber>
    </recommendedName>
    <alternativeName>
        <fullName>NAD(P)H dehydrogenase subunit H</fullName>
    </alternativeName>
    <alternativeName>
        <fullName evidence="1">NADH-plastoquinone oxidoreductase 49 kDa subunit</fullName>
    </alternativeName>
    <alternativeName>
        <fullName evidence="1">NADH-plastoquinone oxidoreductase subunit H</fullName>
    </alternativeName>
</protein>
<gene>
    <name evidence="1" type="primary">ndhH</name>
</gene>
<sequence length="393" mass="45591">MTAPTTRKDLMIVNMGPQHPSMHGVLRLIVTLDGEDVVDCEPILGYLHRGMEKIAENRTIIQYLPYVTRWDYLATMFTEAITINGPEQLGNIQVPKRASYIRVIMLELSRIASHLLWLGPFMADIGAQTPFFYIFRERELIYDLFEAATGMRMMHNYFRIGGVAADLPYGWIDKCLDFCDYFLTGVAEYQKLITRNPIFLERVEGVGIIGRDEAVNWGLSGPMLRASGIEWDLRKVDHYESYDEFDWQVQWQREGDSLARYLVRIGEMTESIKIIQQALEGIPGGPYENLEMRRFDRLKDPEWNDFEYRFISKKPSPTFELSKQELYVRVEAPKGELGIFLIGDQSVFPWRWKIRPPGFINLQILPQLVKRMKLADIMTILGSIDIIMGEVDR</sequence>
<organism>
    <name type="scientific">Solanum tuberosum</name>
    <name type="common">Potato</name>
    <dbReference type="NCBI Taxonomy" id="4113"/>
    <lineage>
        <taxon>Eukaryota</taxon>
        <taxon>Viridiplantae</taxon>
        <taxon>Streptophyta</taxon>
        <taxon>Embryophyta</taxon>
        <taxon>Tracheophyta</taxon>
        <taxon>Spermatophyta</taxon>
        <taxon>Magnoliopsida</taxon>
        <taxon>eudicotyledons</taxon>
        <taxon>Gunneridae</taxon>
        <taxon>Pentapetalae</taxon>
        <taxon>asterids</taxon>
        <taxon>lamiids</taxon>
        <taxon>Solanales</taxon>
        <taxon>Solanaceae</taxon>
        <taxon>Solanoideae</taxon>
        <taxon>Solaneae</taxon>
        <taxon>Solanum</taxon>
    </lineage>
</organism>
<dbReference type="EC" id="7.1.1.-" evidence="1"/>
<dbReference type="EMBL" id="DQ231562">
    <property type="protein sequence ID" value="ABB90093.1"/>
    <property type="molecule type" value="Genomic_DNA"/>
</dbReference>
<dbReference type="EMBL" id="DQ386163">
    <property type="protein sequence ID" value="ABD47113.1"/>
    <property type="molecule type" value="Genomic_DNA"/>
</dbReference>
<dbReference type="RefSeq" id="YP_635695.1">
    <property type="nucleotide sequence ID" value="NC_008096.2"/>
</dbReference>
<dbReference type="SMR" id="Q2VEC5"/>
<dbReference type="FunCoup" id="Q2VEC5">
    <property type="interactions" value="13"/>
</dbReference>
<dbReference type="STRING" id="4113.Q2VEC5"/>
<dbReference type="CarbonylDB" id="Q2VEC5"/>
<dbReference type="PaxDb" id="4113-PGSC0003DMT400022652"/>
<dbReference type="GeneID" id="4099911"/>
<dbReference type="KEGG" id="sot:4099911"/>
<dbReference type="eggNOG" id="KOG2870">
    <property type="taxonomic scope" value="Eukaryota"/>
</dbReference>
<dbReference type="InParanoid" id="Q2VEC5"/>
<dbReference type="OrthoDB" id="1244686at2759"/>
<dbReference type="Proteomes" id="UP000011115">
    <property type="component" value="Unassembled WGS sequence"/>
</dbReference>
<dbReference type="ExpressionAtlas" id="Q2VEC5">
    <property type="expression patterns" value="baseline"/>
</dbReference>
<dbReference type="GO" id="GO:0009535">
    <property type="term" value="C:chloroplast thylakoid membrane"/>
    <property type="evidence" value="ECO:0007669"/>
    <property type="project" value="UniProtKB-SubCell"/>
</dbReference>
<dbReference type="GO" id="GO:0051287">
    <property type="term" value="F:NAD binding"/>
    <property type="evidence" value="ECO:0007669"/>
    <property type="project" value="InterPro"/>
</dbReference>
<dbReference type="GO" id="GO:0016655">
    <property type="term" value="F:oxidoreductase activity, acting on NAD(P)H, quinone or similar compound as acceptor"/>
    <property type="evidence" value="ECO:0007669"/>
    <property type="project" value="UniProtKB-UniRule"/>
</dbReference>
<dbReference type="GO" id="GO:0048038">
    <property type="term" value="F:quinone binding"/>
    <property type="evidence" value="ECO:0007669"/>
    <property type="project" value="UniProtKB-KW"/>
</dbReference>
<dbReference type="GO" id="GO:0019684">
    <property type="term" value="P:photosynthesis, light reaction"/>
    <property type="evidence" value="ECO:0007669"/>
    <property type="project" value="UniProtKB-UniRule"/>
</dbReference>
<dbReference type="FunFam" id="1.10.645.10:FF:000003">
    <property type="entry name" value="NAD(P)H-quinone oxidoreductase subunit H, chloroplastic"/>
    <property type="match status" value="1"/>
</dbReference>
<dbReference type="Gene3D" id="1.10.645.10">
    <property type="entry name" value="Cytochrome-c3 Hydrogenase, chain B"/>
    <property type="match status" value="1"/>
</dbReference>
<dbReference type="HAMAP" id="MF_01358">
    <property type="entry name" value="NDH1_NuoD"/>
    <property type="match status" value="1"/>
</dbReference>
<dbReference type="InterPro" id="IPR001135">
    <property type="entry name" value="NADH_Q_OxRdtase_suD"/>
</dbReference>
<dbReference type="InterPro" id="IPR014029">
    <property type="entry name" value="NADH_UbQ_OxRdtase_49kDa_CS"/>
</dbReference>
<dbReference type="InterPro" id="IPR022885">
    <property type="entry name" value="NDH1_su_D/H"/>
</dbReference>
<dbReference type="InterPro" id="IPR029014">
    <property type="entry name" value="NiFe-Hase_large"/>
</dbReference>
<dbReference type="NCBIfam" id="NF004739">
    <property type="entry name" value="PRK06075.1"/>
    <property type="match status" value="1"/>
</dbReference>
<dbReference type="NCBIfam" id="NF005649">
    <property type="entry name" value="PRK07415.1"/>
    <property type="match status" value="1"/>
</dbReference>
<dbReference type="PANTHER" id="PTHR11993:SF10">
    <property type="entry name" value="NADH DEHYDROGENASE [UBIQUINONE] IRON-SULFUR PROTEIN 2, MITOCHONDRIAL"/>
    <property type="match status" value="1"/>
</dbReference>
<dbReference type="PANTHER" id="PTHR11993">
    <property type="entry name" value="NADH-UBIQUINONE OXIDOREDUCTASE 49 KDA SUBUNIT"/>
    <property type="match status" value="1"/>
</dbReference>
<dbReference type="Pfam" id="PF00346">
    <property type="entry name" value="Complex1_49kDa"/>
    <property type="match status" value="1"/>
</dbReference>
<dbReference type="SUPFAM" id="SSF56762">
    <property type="entry name" value="HydB/Nqo4-like"/>
    <property type="match status" value="1"/>
</dbReference>
<dbReference type="PROSITE" id="PS00535">
    <property type="entry name" value="COMPLEX1_49K"/>
    <property type="match status" value="1"/>
</dbReference>
<evidence type="ECO:0000255" key="1">
    <source>
        <dbReference type="HAMAP-Rule" id="MF_01358"/>
    </source>
</evidence>
<proteinExistence type="inferred from homology"/>
<keyword id="KW-0150">Chloroplast</keyword>
<keyword id="KW-0472">Membrane</keyword>
<keyword id="KW-0520">NAD</keyword>
<keyword id="KW-0521">NADP</keyword>
<keyword id="KW-0934">Plastid</keyword>
<keyword id="KW-0618">Plastoquinone</keyword>
<keyword id="KW-0874">Quinone</keyword>
<keyword id="KW-1185">Reference proteome</keyword>
<keyword id="KW-0793">Thylakoid</keyword>
<keyword id="KW-1278">Translocase</keyword>
<keyword id="KW-0813">Transport</keyword>
<name>NDHH_SOLTU</name>
<comment type="function">
    <text evidence="1">NDH shuttles electrons from NAD(P)H:plastoquinone, via FMN and iron-sulfur (Fe-S) centers, to quinones in the photosynthetic chain and possibly in a chloroplast respiratory chain. The immediate electron acceptor for the enzyme in this species is believed to be plastoquinone. Couples the redox reaction to proton translocation, and thus conserves the redox energy in a proton gradient.</text>
</comment>
<comment type="catalytic activity">
    <reaction evidence="1">
        <text>a plastoquinone + NADH + (n+1) H(+)(in) = a plastoquinol + NAD(+) + n H(+)(out)</text>
        <dbReference type="Rhea" id="RHEA:42608"/>
        <dbReference type="Rhea" id="RHEA-COMP:9561"/>
        <dbReference type="Rhea" id="RHEA-COMP:9562"/>
        <dbReference type="ChEBI" id="CHEBI:15378"/>
        <dbReference type="ChEBI" id="CHEBI:17757"/>
        <dbReference type="ChEBI" id="CHEBI:57540"/>
        <dbReference type="ChEBI" id="CHEBI:57945"/>
        <dbReference type="ChEBI" id="CHEBI:62192"/>
    </reaction>
</comment>
<comment type="catalytic activity">
    <reaction evidence="1">
        <text>a plastoquinone + NADPH + (n+1) H(+)(in) = a plastoquinol + NADP(+) + n H(+)(out)</text>
        <dbReference type="Rhea" id="RHEA:42612"/>
        <dbReference type="Rhea" id="RHEA-COMP:9561"/>
        <dbReference type="Rhea" id="RHEA-COMP:9562"/>
        <dbReference type="ChEBI" id="CHEBI:15378"/>
        <dbReference type="ChEBI" id="CHEBI:17757"/>
        <dbReference type="ChEBI" id="CHEBI:57783"/>
        <dbReference type="ChEBI" id="CHEBI:58349"/>
        <dbReference type="ChEBI" id="CHEBI:62192"/>
    </reaction>
</comment>
<comment type="subunit">
    <text evidence="1">NDH is composed of at least 16 different subunits, 5 of which are encoded in the nucleus.</text>
</comment>
<comment type="subcellular location">
    <subcellularLocation>
        <location evidence="1">Plastid</location>
        <location evidence="1">Chloroplast thylakoid membrane</location>
        <topology evidence="1">Peripheral membrane protein</topology>
        <orientation evidence="1">Stromal side</orientation>
    </subcellularLocation>
</comment>
<comment type="similarity">
    <text evidence="1">Belongs to the complex I 49 kDa subunit family.</text>
</comment>
<feature type="chain" id="PRO_0000277574" description="NAD(P)H-quinone oxidoreductase subunit H, chloroplastic">
    <location>
        <begin position="1"/>
        <end position="393"/>
    </location>
</feature>
<accession>Q2VEC5</accession>
<reference key="1">
    <citation type="journal article" date="2006" name="Plant Cell Rep.">
        <title>The complete chloroplast genome sequences of Solanum tuberosum and comparative analysis with Solanaceae species identified the presence of a 241-bp deletion in cultivated potato chloroplast DNA sequence.</title>
        <authorList>
            <person name="Chung H.-J."/>
            <person name="Jung J.D."/>
            <person name="Park H.-W."/>
            <person name="Kim J.-H."/>
            <person name="Cha H.W."/>
            <person name="Min S.R."/>
            <person name="Jeong W.-J."/>
            <person name="Liu J.R."/>
        </authorList>
    </citation>
    <scope>NUCLEOTIDE SEQUENCE [LARGE SCALE GENOMIC DNA]</scope>
    <source>
        <strain>cv. Desiree</strain>
    </source>
</reference>
<reference key="2">
    <citation type="submission" date="2006-02" db="EMBL/GenBank/DDBJ databases">
        <title>Complete chloroplast genome sequences of Solanum tuberosum cultivar Desiree and comparative analyses with other Solanaceae genomes.</title>
        <authorList>
            <person name="Gargano D."/>
            <person name="Scotti N."/>
            <person name="Vezzi A."/>
            <person name="Bilardi A."/>
            <person name="Valle G."/>
            <person name="Grillo S."/>
            <person name="Cardi T."/>
        </authorList>
    </citation>
    <scope>NUCLEOTIDE SEQUENCE [LARGE SCALE GENOMIC DNA]</scope>
    <source>
        <strain>cv. Desiree</strain>
    </source>
</reference>
<geneLocation type="chloroplast"/>